<reference key="1">
    <citation type="journal article" date="1998" name="Mol. Biol. Evol.">
        <title>Body size effects and rates of cytochrome-b evolution in tube-nosed seabirds.</title>
        <authorList>
            <person name="Nunn G.B."/>
            <person name="Stanley S.E."/>
        </authorList>
    </citation>
    <scope>NUCLEOTIDE SEQUENCE [GENOMIC DNA]</scope>
    <source>
        <strain>Isolate Otris</strain>
    </source>
</reference>
<comment type="function">
    <text evidence="2">Component of the ubiquinol-cytochrome c reductase complex (complex III or cytochrome b-c1 complex) that is part of the mitochondrial respiratory chain. The b-c1 complex mediates electron transfer from ubiquinol to cytochrome c. Contributes to the generation of a proton gradient across the mitochondrial membrane that is then used for ATP synthesis.</text>
</comment>
<comment type="cofactor">
    <cofactor evidence="2">
        <name>heme b</name>
        <dbReference type="ChEBI" id="CHEBI:60344"/>
    </cofactor>
    <text evidence="2">Binds 2 heme b groups non-covalently.</text>
</comment>
<comment type="subunit">
    <text evidence="2">The cytochrome bc1 complex contains 11 subunits: 3 respiratory subunits (MT-CYB, CYC1 and UQCRFS1), 2 core proteins (UQCRC1 and UQCRC2) and 6 low-molecular weight proteins (UQCRH/QCR6, UQCRB/QCR7, UQCRQ/QCR8, UQCR10/QCR9, UQCR11/QCR10 and a cleavage product of UQCRFS1). This cytochrome bc1 complex then forms a dimer.</text>
</comment>
<comment type="subcellular location">
    <subcellularLocation>
        <location evidence="2">Mitochondrion inner membrane</location>
        <topology evidence="2">Multi-pass membrane protein</topology>
    </subcellularLocation>
</comment>
<comment type="miscellaneous">
    <text evidence="1">Heme 1 (or BL or b562) is low-potential and absorbs at about 562 nm, and heme 2 (or BH or b566) is high-potential and absorbs at about 566 nm.</text>
</comment>
<comment type="similarity">
    <text evidence="3 4">Belongs to the cytochrome b family.</text>
</comment>
<comment type="caution">
    <text evidence="2">The full-length protein contains only eight transmembrane helices, not nine as predicted by bioinformatics tools.</text>
</comment>
<name>CYB_OCETR</name>
<accession>O79213</accession>
<organism>
    <name type="scientific">Oceanodroma tristrami</name>
    <name type="common">Tristram's storm-petrel</name>
    <name type="synonym">Hydrobates tristrami</name>
    <dbReference type="NCBI Taxonomy" id="79634"/>
    <lineage>
        <taxon>Eukaryota</taxon>
        <taxon>Metazoa</taxon>
        <taxon>Chordata</taxon>
        <taxon>Craniata</taxon>
        <taxon>Vertebrata</taxon>
        <taxon>Euteleostomi</taxon>
        <taxon>Archelosauria</taxon>
        <taxon>Archosauria</taxon>
        <taxon>Dinosauria</taxon>
        <taxon>Saurischia</taxon>
        <taxon>Theropoda</taxon>
        <taxon>Coelurosauria</taxon>
        <taxon>Aves</taxon>
        <taxon>Neognathae</taxon>
        <taxon>Neoaves</taxon>
        <taxon>Aequornithes</taxon>
        <taxon>Procellariiformes</taxon>
        <taxon>Hydrobatidae</taxon>
        <taxon>Oceanodroma</taxon>
    </lineage>
</organism>
<dbReference type="EMBL" id="AF076067">
    <property type="protein sequence ID" value="AAC68624.1"/>
    <property type="molecule type" value="Genomic_DNA"/>
</dbReference>
<dbReference type="SMR" id="O79213"/>
<dbReference type="GO" id="GO:0005743">
    <property type="term" value="C:mitochondrial inner membrane"/>
    <property type="evidence" value="ECO:0007669"/>
    <property type="project" value="UniProtKB-SubCell"/>
</dbReference>
<dbReference type="GO" id="GO:0045275">
    <property type="term" value="C:respiratory chain complex III"/>
    <property type="evidence" value="ECO:0007669"/>
    <property type="project" value="InterPro"/>
</dbReference>
<dbReference type="GO" id="GO:0046872">
    <property type="term" value="F:metal ion binding"/>
    <property type="evidence" value="ECO:0007669"/>
    <property type="project" value="UniProtKB-KW"/>
</dbReference>
<dbReference type="GO" id="GO:0008121">
    <property type="term" value="F:ubiquinol-cytochrome-c reductase activity"/>
    <property type="evidence" value="ECO:0007669"/>
    <property type="project" value="InterPro"/>
</dbReference>
<dbReference type="GO" id="GO:0006122">
    <property type="term" value="P:mitochondrial electron transport, ubiquinol to cytochrome c"/>
    <property type="evidence" value="ECO:0007669"/>
    <property type="project" value="TreeGrafter"/>
</dbReference>
<dbReference type="CDD" id="cd00290">
    <property type="entry name" value="cytochrome_b_C"/>
    <property type="match status" value="1"/>
</dbReference>
<dbReference type="CDD" id="cd00284">
    <property type="entry name" value="Cytochrome_b_N"/>
    <property type="match status" value="1"/>
</dbReference>
<dbReference type="FunFam" id="1.20.810.10:FF:000002">
    <property type="entry name" value="Cytochrome b"/>
    <property type="match status" value="1"/>
</dbReference>
<dbReference type="Gene3D" id="1.20.810.10">
    <property type="entry name" value="Cytochrome Bc1 Complex, Chain C"/>
    <property type="match status" value="1"/>
</dbReference>
<dbReference type="InterPro" id="IPR005798">
    <property type="entry name" value="Cyt_b/b6_C"/>
</dbReference>
<dbReference type="InterPro" id="IPR036150">
    <property type="entry name" value="Cyt_b/b6_C_sf"/>
</dbReference>
<dbReference type="InterPro" id="IPR005797">
    <property type="entry name" value="Cyt_b/b6_N"/>
</dbReference>
<dbReference type="InterPro" id="IPR027387">
    <property type="entry name" value="Cytb/b6-like_sf"/>
</dbReference>
<dbReference type="InterPro" id="IPR030689">
    <property type="entry name" value="Cytochrome_b"/>
</dbReference>
<dbReference type="InterPro" id="IPR048260">
    <property type="entry name" value="Cytochrome_b_C_euk/bac"/>
</dbReference>
<dbReference type="InterPro" id="IPR048259">
    <property type="entry name" value="Cytochrome_b_N_euk/bac"/>
</dbReference>
<dbReference type="InterPro" id="IPR016174">
    <property type="entry name" value="Di-haem_cyt_TM"/>
</dbReference>
<dbReference type="PANTHER" id="PTHR19271">
    <property type="entry name" value="CYTOCHROME B"/>
    <property type="match status" value="1"/>
</dbReference>
<dbReference type="PANTHER" id="PTHR19271:SF16">
    <property type="entry name" value="CYTOCHROME B"/>
    <property type="match status" value="1"/>
</dbReference>
<dbReference type="Pfam" id="PF00032">
    <property type="entry name" value="Cytochrom_B_C"/>
    <property type="match status" value="1"/>
</dbReference>
<dbReference type="Pfam" id="PF00033">
    <property type="entry name" value="Cytochrome_B"/>
    <property type="match status" value="1"/>
</dbReference>
<dbReference type="PIRSF" id="PIRSF038885">
    <property type="entry name" value="COB"/>
    <property type="match status" value="1"/>
</dbReference>
<dbReference type="SUPFAM" id="SSF81648">
    <property type="entry name" value="a domain/subunit of cytochrome bc1 complex (Ubiquinol-cytochrome c reductase)"/>
    <property type="match status" value="1"/>
</dbReference>
<dbReference type="SUPFAM" id="SSF81342">
    <property type="entry name" value="Transmembrane di-heme cytochromes"/>
    <property type="match status" value="1"/>
</dbReference>
<dbReference type="PROSITE" id="PS51003">
    <property type="entry name" value="CYTB_CTER"/>
    <property type="match status" value="1"/>
</dbReference>
<dbReference type="PROSITE" id="PS51002">
    <property type="entry name" value="CYTB_NTER"/>
    <property type="match status" value="1"/>
</dbReference>
<feature type="chain" id="PRO_0000061295" description="Cytochrome b">
    <location>
        <begin position="1"/>
        <end position="380"/>
    </location>
</feature>
<feature type="transmembrane region" description="Helical" evidence="2">
    <location>
        <begin position="34"/>
        <end position="54"/>
    </location>
</feature>
<feature type="transmembrane region" description="Helical" evidence="2">
    <location>
        <begin position="78"/>
        <end position="99"/>
    </location>
</feature>
<feature type="transmembrane region" description="Helical" evidence="2">
    <location>
        <begin position="114"/>
        <end position="134"/>
    </location>
</feature>
<feature type="transmembrane region" description="Helical" evidence="2">
    <location>
        <begin position="179"/>
        <end position="199"/>
    </location>
</feature>
<feature type="transmembrane region" description="Helical" evidence="2">
    <location>
        <begin position="227"/>
        <end position="247"/>
    </location>
</feature>
<feature type="transmembrane region" description="Helical" evidence="2">
    <location>
        <begin position="289"/>
        <end position="309"/>
    </location>
</feature>
<feature type="transmembrane region" description="Helical" evidence="2">
    <location>
        <begin position="321"/>
        <end position="341"/>
    </location>
</feature>
<feature type="transmembrane region" description="Helical" evidence="2">
    <location>
        <begin position="348"/>
        <end position="368"/>
    </location>
</feature>
<feature type="binding site" description="axial binding residue" evidence="2">
    <location>
        <position position="84"/>
    </location>
    <ligand>
        <name>heme b</name>
        <dbReference type="ChEBI" id="CHEBI:60344"/>
        <label>b562</label>
    </ligand>
    <ligandPart>
        <name>Fe</name>
        <dbReference type="ChEBI" id="CHEBI:18248"/>
    </ligandPart>
</feature>
<feature type="binding site" description="axial binding residue" evidence="2">
    <location>
        <position position="98"/>
    </location>
    <ligand>
        <name>heme b</name>
        <dbReference type="ChEBI" id="CHEBI:60344"/>
        <label>b566</label>
    </ligand>
    <ligandPart>
        <name>Fe</name>
        <dbReference type="ChEBI" id="CHEBI:18248"/>
    </ligandPart>
</feature>
<feature type="binding site" description="axial binding residue" evidence="2">
    <location>
        <position position="183"/>
    </location>
    <ligand>
        <name>heme b</name>
        <dbReference type="ChEBI" id="CHEBI:60344"/>
        <label>b562</label>
    </ligand>
    <ligandPart>
        <name>Fe</name>
        <dbReference type="ChEBI" id="CHEBI:18248"/>
    </ligandPart>
</feature>
<feature type="binding site" description="axial binding residue" evidence="2">
    <location>
        <position position="197"/>
    </location>
    <ligand>
        <name>heme b</name>
        <dbReference type="ChEBI" id="CHEBI:60344"/>
        <label>b566</label>
    </ligand>
    <ligandPart>
        <name>Fe</name>
        <dbReference type="ChEBI" id="CHEBI:18248"/>
    </ligandPart>
</feature>
<feature type="binding site" evidence="2">
    <location>
        <position position="202"/>
    </location>
    <ligand>
        <name>a ubiquinone</name>
        <dbReference type="ChEBI" id="CHEBI:16389"/>
    </ligand>
</feature>
<gene>
    <name type="primary">MT-CYB</name>
    <name type="synonym">COB</name>
    <name type="synonym">CYTB</name>
    <name type="synonym">MTCYB</name>
</gene>
<protein>
    <recommendedName>
        <fullName>Cytochrome b</fullName>
    </recommendedName>
    <alternativeName>
        <fullName>Complex III subunit 3</fullName>
    </alternativeName>
    <alternativeName>
        <fullName>Complex III subunit III</fullName>
    </alternativeName>
    <alternativeName>
        <fullName>Cytochrome b-c1 complex subunit 3</fullName>
    </alternativeName>
    <alternativeName>
        <fullName>Ubiquinol-cytochrome-c reductase complex cytochrome b subunit</fullName>
    </alternativeName>
</protein>
<evidence type="ECO:0000250" key="1"/>
<evidence type="ECO:0000250" key="2">
    <source>
        <dbReference type="UniProtKB" id="P00157"/>
    </source>
</evidence>
<evidence type="ECO:0000255" key="3">
    <source>
        <dbReference type="PROSITE-ProRule" id="PRU00967"/>
    </source>
</evidence>
<evidence type="ECO:0000255" key="4">
    <source>
        <dbReference type="PROSITE-ProRule" id="PRU00968"/>
    </source>
</evidence>
<keyword id="KW-0249">Electron transport</keyword>
<keyword id="KW-0349">Heme</keyword>
<keyword id="KW-0408">Iron</keyword>
<keyword id="KW-0472">Membrane</keyword>
<keyword id="KW-0479">Metal-binding</keyword>
<keyword id="KW-0496">Mitochondrion</keyword>
<keyword id="KW-0999">Mitochondrion inner membrane</keyword>
<keyword id="KW-0679">Respiratory chain</keyword>
<keyword id="KW-0812">Transmembrane</keyword>
<keyword id="KW-1133">Transmembrane helix</keyword>
<keyword id="KW-0813">Transport</keyword>
<keyword id="KW-0830">Ubiquinone</keyword>
<geneLocation type="mitochondrion"/>
<sequence>MAPNPRKSHPLLKMINNSLIDLPTPPNISAWWNFGSLLALCLVTQILTGLLLAMHYTADTTLAFSSVAHTCRNVQYGWLIRNMHANGASFFFICIYMHIGRGFYYGSYLHKETWNTGVLLLLTLMATAFVGYVLPWGQMSFWGATVITNMFSAIPYIGQTIVEWAWGGFSVDNPTLTRFFALHFLLPFMIAGLTLIHLTFLHESGSNNPLGIVSNCDKIPFHPYYSLKDILGLALLLLPLTAMALFSPNLLGDPENFTPANPLVTPPHIKPEWYFLFAYAILRSIPNKLGGVLALAASVLVLLLCPFLHTSKQRTMAFRPLSQSLFWILVANLLILTWIGSQPVEHPFIIIGQLASTTYFIILLILFPITSALENKMLNF</sequence>
<proteinExistence type="inferred from homology"/>